<proteinExistence type="inferred from homology"/>
<name>SYP_MYCPU</name>
<keyword id="KW-0030">Aminoacyl-tRNA synthetase</keyword>
<keyword id="KW-0067">ATP-binding</keyword>
<keyword id="KW-0963">Cytoplasm</keyword>
<keyword id="KW-0436">Ligase</keyword>
<keyword id="KW-0547">Nucleotide-binding</keyword>
<keyword id="KW-0648">Protein biosynthesis</keyword>
<keyword id="KW-1185">Reference proteome</keyword>
<sequence>MKKLEKITPLEENFAKWYTDVVKNGELIDYGPVKGTLIFKPNSYGIWENIQLQFNKILKAKGIKNVYLPLLIPESLMKAEFEHIEGFAPELATLTKVGSKNLSENIYLRPTSEVLFQKFFKAEIESYKDLPKIYNQWANVIRWEKTTNPFLRSTEFLWQEGHSSHESAIEARKFTREMLKTYCKFLRKFLAIPTIMGKKTPREKFSGAYSTYTLEAMMKDGKALQSGTTHYLAQNFSEAYDVNFKDSENKKQFVYQTSWGLSTRLIGAIIMTHGDNRGIIIPPFVAPCQIDILAFNPRRSAEIEKFVNQVEKILKKPFRVNVDRSDKTLGFKASQSEIQGVPLRIEIGPRDFENNQVTLVRRDTLEKQSVSINDIVKVSRETLQAIHNNLYEQAKIRLKNNIVEINDYEEFKQEIANHKFVISPLCCTTAEAEEEIQKETGATARCIPFDYQKPGENKCLICKCMTKRFVLFARAY</sequence>
<evidence type="ECO:0000255" key="1">
    <source>
        <dbReference type="HAMAP-Rule" id="MF_01571"/>
    </source>
</evidence>
<evidence type="ECO:0000305" key="2"/>
<feature type="chain" id="PRO_0000249140" description="Proline--tRNA ligase">
    <location>
        <begin position="1"/>
        <end position="476"/>
    </location>
</feature>
<dbReference type="EC" id="6.1.1.15" evidence="1"/>
<dbReference type="EMBL" id="AL445563">
    <property type="protein sequence ID" value="CAC13356.1"/>
    <property type="status" value="ALT_INIT"/>
    <property type="molecule type" value="Genomic_DNA"/>
</dbReference>
<dbReference type="PIR" id="G90534">
    <property type="entry name" value="G90534"/>
</dbReference>
<dbReference type="RefSeq" id="WP_041363954.1">
    <property type="nucleotide sequence ID" value="NC_002771.1"/>
</dbReference>
<dbReference type="SMR" id="Q98R27"/>
<dbReference type="STRING" id="272635.gene:17576770"/>
<dbReference type="KEGG" id="mpu:MYPU_1830"/>
<dbReference type="eggNOG" id="COG0441">
    <property type="taxonomic scope" value="Bacteria"/>
</dbReference>
<dbReference type="HOGENOM" id="CLU_001882_4_2_14"/>
<dbReference type="BioCyc" id="MPUL272635:G1GT6-186-MONOMER"/>
<dbReference type="Proteomes" id="UP000000528">
    <property type="component" value="Chromosome"/>
</dbReference>
<dbReference type="GO" id="GO:0017101">
    <property type="term" value="C:aminoacyl-tRNA synthetase multienzyme complex"/>
    <property type="evidence" value="ECO:0007669"/>
    <property type="project" value="TreeGrafter"/>
</dbReference>
<dbReference type="GO" id="GO:0005737">
    <property type="term" value="C:cytoplasm"/>
    <property type="evidence" value="ECO:0007669"/>
    <property type="project" value="UniProtKB-SubCell"/>
</dbReference>
<dbReference type="GO" id="GO:0005524">
    <property type="term" value="F:ATP binding"/>
    <property type="evidence" value="ECO:0007669"/>
    <property type="project" value="UniProtKB-UniRule"/>
</dbReference>
<dbReference type="GO" id="GO:0004827">
    <property type="term" value="F:proline-tRNA ligase activity"/>
    <property type="evidence" value="ECO:0007669"/>
    <property type="project" value="UniProtKB-UniRule"/>
</dbReference>
<dbReference type="GO" id="GO:0006433">
    <property type="term" value="P:prolyl-tRNA aminoacylation"/>
    <property type="evidence" value="ECO:0007669"/>
    <property type="project" value="UniProtKB-UniRule"/>
</dbReference>
<dbReference type="CDD" id="cd00778">
    <property type="entry name" value="ProRS_core_arch_euk"/>
    <property type="match status" value="1"/>
</dbReference>
<dbReference type="FunFam" id="3.30.930.10:FF:000037">
    <property type="entry name" value="Proline--tRNA ligase"/>
    <property type="match status" value="1"/>
</dbReference>
<dbReference type="Gene3D" id="3.40.50.800">
    <property type="entry name" value="Anticodon-binding domain"/>
    <property type="match status" value="1"/>
</dbReference>
<dbReference type="Gene3D" id="3.30.930.10">
    <property type="entry name" value="Bira Bifunctional Protein, Domain 2"/>
    <property type="match status" value="1"/>
</dbReference>
<dbReference type="Gene3D" id="3.30.110.30">
    <property type="entry name" value="C-terminal domain of ProRS"/>
    <property type="match status" value="1"/>
</dbReference>
<dbReference type="HAMAP" id="MF_01571">
    <property type="entry name" value="Pro_tRNA_synth_type3"/>
    <property type="match status" value="1"/>
</dbReference>
<dbReference type="InterPro" id="IPR002314">
    <property type="entry name" value="aa-tRNA-synt_IIb"/>
</dbReference>
<dbReference type="InterPro" id="IPR006195">
    <property type="entry name" value="aa-tRNA-synth_II"/>
</dbReference>
<dbReference type="InterPro" id="IPR045864">
    <property type="entry name" value="aa-tRNA-synth_II/BPL/LPL"/>
</dbReference>
<dbReference type="InterPro" id="IPR004154">
    <property type="entry name" value="Anticodon-bd"/>
</dbReference>
<dbReference type="InterPro" id="IPR036621">
    <property type="entry name" value="Anticodon-bd_dom_sf"/>
</dbReference>
<dbReference type="InterPro" id="IPR002316">
    <property type="entry name" value="Pro-tRNA-ligase_IIa"/>
</dbReference>
<dbReference type="InterPro" id="IPR004499">
    <property type="entry name" value="Pro-tRNA-ligase_IIa_arc-type"/>
</dbReference>
<dbReference type="InterPro" id="IPR016061">
    <property type="entry name" value="Pro-tRNA_ligase_II_C"/>
</dbReference>
<dbReference type="InterPro" id="IPR017449">
    <property type="entry name" value="Pro-tRNA_synth_II"/>
</dbReference>
<dbReference type="InterPro" id="IPR033721">
    <property type="entry name" value="ProRS_core_arch_euk"/>
</dbReference>
<dbReference type="NCBIfam" id="TIGR00408">
    <property type="entry name" value="proS_fam_I"/>
    <property type="match status" value="1"/>
</dbReference>
<dbReference type="PANTHER" id="PTHR43382:SF2">
    <property type="entry name" value="BIFUNCTIONAL GLUTAMATE_PROLINE--TRNA LIGASE"/>
    <property type="match status" value="1"/>
</dbReference>
<dbReference type="PANTHER" id="PTHR43382">
    <property type="entry name" value="PROLYL-TRNA SYNTHETASE"/>
    <property type="match status" value="1"/>
</dbReference>
<dbReference type="Pfam" id="PF03129">
    <property type="entry name" value="HGTP_anticodon"/>
    <property type="match status" value="1"/>
</dbReference>
<dbReference type="Pfam" id="PF09180">
    <property type="entry name" value="ProRS-C_1"/>
    <property type="match status" value="1"/>
</dbReference>
<dbReference type="Pfam" id="PF00587">
    <property type="entry name" value="tRNA-synt_2b"/>
    <property type="match status" value="1"/>
</dbReference>
<dbReference type="PRINTS" id="PR01046">
    <property type="entry name" value="TRNASYNTHPRO"/>
</dbReference>
<dbReference type="SMART" id="SM00946">
    <property type="entry name" value="ProRS-C_1"/>
    <property type="match status" value="1"/>
</dbReference>
<dbReference type="SUPFAM" id="SSF64586">
    <property type="entry name" value="C-terminal domain of ProRS"/>
    <property type="match status" value="1"/>
</dbReference>
<dbReference type="SUPFAM" id="SSF52954">
    <property type="entry name" value="Class II aaRS ABD-related"/>
    <property type="match status" value="1"/>
</dbReference>
<dbReference type="SUPFAM" id="SSF55681">
    <property type="entry name" value="Class II aaRS and biotin synthetases"/>
    <property type="match status" value="1"/>
</dbReference>
<dbReference type="PROSITE" id="PS50862">
    <property type="entry name" value="AA_TRNA_LIGASE_II"/>
    <property type="match status" value="1"/>
</dbReference>
<comment type="function">
    <text evidence="1">Catalyzes the attachment of proline to tRNA(Pro) in a two-step reaction: proline is first activated by ATP to form Pro-AMP and then transferred to the acceptor end of tRNA(Pro).</text>
</comment>
<comment type="catalytic activity">
    <reaction evidence="1">
        <text>tRNA(Pro) + L-proline + ATP = L-prolyl-tRNA(Pro) + AMP + diphosphate</text>
        <dbReference type="Rhea" id="RHEA:14305"/>
        <dbReference type="Rhea" id="RHEA-COMP:9700"/>
        <dbReference type="Rhea" id="RHEA-COMP:9702"/>
        <dbReference type="ChEBI" id="CHEBI:30616"/>
        <dbReference type="ChEBI" id="CHEBI:33019"/>
        <dbReference type="ChEBI" id="CHEBI:60039"/>
        <dbReference type="ChEBI" id="CHEBI:78442"/>
        <dbReference type="ChEBI" id="CHEBI:78532"/>
        <dbReference type="ChEBI" id="CHEBI:456215"/>
        <dbReference type="EC" id="6.1.1.15"/>
    </reaction>
</comment>
<comment type="subunit">
    <text evidence="1">Homodimer.</text>
</comment>
<comment type="subcellular location">
    <subcellularLocation>
        <location evidence="1">Cytoplasm</location>
    </subcellularLocation>
</comment>
<comment type="domain">
    <text evidence="1">Consists of three domains: the N-terminal catalytic domain, the anticodon-binding domain and the C-terminal extension.</text>
</comment>
<comment type="similarity">
    <text evidence="1">Belongs to the class-II aminoacyl-tRNA synthetase family. ProS type 3 subfamily.</text>
</comment>
<comment type="sequence caution" evidence="2">
    <conflict type="erroneous initiation">
        <sequence resource="EMBL-CDS" id="CAC13356"/>
    </conflict>
</comment>
<accession>Q98R27</accession>
<gene>
    <name evidence="1" type="primary">proS</name>
    <name type="ordered locus">MYPU_1830</name>
</gene>
<protein>
    <recommendedName>
        <fullName evidence="1">Proline--tRNA ligase</fullName>
        <ecNumber evidence="1">6.1.1.15</ecNumber>
    </recommendedName>
    <alternativeName>
        <fullName evidence="1">Prolyl-tRNA synthetase</fullName>
        <shortName evidence="1">ProRS</shortName>
    </alternativeName>
</protein>
<organism>
    <name type="scientific">Mycoplasmopsis pulmonis (strain UAB CTIP)</name>
    <name type="common">Mycoplasma pulmonis</name>
    <dbReference type="NCBI Taxonomy" id="272635"/>
    <lineage>
        <taxon>Bacteria</taxon>
        <taxon>Bacillati</taxon>
        <taxon>Mycoplasmatota</taxon>
        <taxon>Mycoplasmoidales</taxon>
        <taxon>Metamycoplasmataceae</taxon>
        <taxon>Mycoplasmopsis</taxon>
    </lineage>
</organism>
<reference key="1">
    <citation type="journal article" date="2001" name="Nucleic Acids Res.">
        <title>The complete genome sequence of the murine respiratory pathogen Mycoplasma pulmonis.</title>
        <authorList>
            <person name="Chambaud I."/>
            <person name="Heilig R."/>
            <person name="Ferris S."/>
            <person name="Barbe V."/>
            <person name="Samson D."/>
            <person name="Galisson F."/>
            <person name="Moszer I."/>
            <person name="Dybvig K."/>
            <person name="Wroblewski H."/>
            <person name="Viari A."/>
            <person name="Rocha E.P.C."/>
            <person name="Blanchard A."/>
        </authorList>
    </citation>
    <scope>NUCLEOTIDE SEQUENCE [LARGE SCALE GENOMIC DNA]</scope>
    <source>
        <strain>UAB CTIP</strain>
    </source>
</reference>